<gene>
    <name evidence="1" type="primary">tilS</name>
    <name type="ordered locus">MYPU_7800</name>
</gene>
<accession>Q98PE3</accession>
<name>TILS_MYCPU</name>
<proteinExistence type="inferred from homology"/>
<dbReference type="EC" id="6.3.4.19" evidence="1"/>
<dbReference type="EMBL" id="AL445565">
    <property type="protein sequence ID" value="CAC13953.1"/>
    <property type="molecule type" value="Genomic_DNA"/>
</dbReference>
<dbReference type="PIR" id="D90609">
    <property type="entry name" value="D90609"/>
</dbReference>
<dbReference type="RefSeq" id="WP_010925580.1">
    <property type="nucleotide sequence ID" value="NC_002771.1"/>
</dbReference>
<dbReference type="SMR" id="Q98PE3"/>
<dbReference type="STRING" id="272635.gene:17577391"/>
<dbReference type="KEGG" id="mpu:MYPU_7800"/>
<dbReference type="eggNOG" id="COG0037">
    <property type="taxonomic scope" value="Bacteria"/>
</dbReference>
<dbReference type="HOGENOM" id="CLU_018869_0_2_14"/>
<dbReference type="BioCyc" id="MPUL272635:G1GT6-788-MONOMER"/>
<dbReference type="Proteomes" id="UP000000528">
    <property type="component" value="Chromosome"/>
</dbReference>
<dbReference type="GO" id="GO:0005737">
    <property type="term" value="C:cytoplasm"/>
    <property type="evidence" value="ECO:0007669"/>
    <property type="project" value="UniProtKB-SubCell"/>
</dbReference>
<dbReference type="GO" id="GO:0005524">
    <property type="term" value="F:ATP binding"/>
    <property type="evidence" value="ECO:0007669"/>
    <property type="project" value="UniProtKB-UniRule"/>
</dbReference>
<dbReference type="GO" id="GO:0032267">
    <property type="term" value="F:tRNA(Ile)-lysidine synthase activity"/>
    <property type="evidence" value="ECO:0007669"/>
    <property type="project" value="UniProtKB-EC"/>
</dbReference>
<dbReference type="GO" id="GO:0006400">
    <property type="term" value="P:tRNA modification"/>
    <property type="evidence" value="ECO:0007669"/>
    <property type="project" value="UniProtKB-UniRule"/>
</dbReference>
<dbReference type="CDD" id="cd01992">
    <property type="entry name" value="TilS_N"/>
    <property type="match status" value="1"/>
</dbReference>
<dbReference type="Gene3D" id="3.40.50.620">
    <property type="entry name" value="HUPs"/>
    <property type="match status" value="1"/>
</dbReference>
<dbReference type="Gene3D" id="1.10.10.1360">
    <property type="entry name" value="tRNA (Ile)-lysidine synthase"/>
    <property type="match status" value="1"/>
</dbReference>
<dbReference type="HAMAP" id="MF_01161">
    <property type="entry name" value="tRNA_Ile_lys_synt"/>
    <property type="match status" value="1"/>
</dbReference>
<dbReference type="InterPro" id="IPR014729">
    <property type="entry name" value="Rossmann-like_a/b/a_fold"/>
</dbReference>
<dbReference type="InterPro" id="IPR011063">
    <property type="entry name" value="TilS/TtcA_N"/>
</dbReference>
<dbReference type="InterPro" id="IPR012094">
    <property type="entry name" value="tRNA_Ile_lys_synt"/>
</dbReference>
<dbReference type="InterPro" id="IPR012795">
    <property type="entry name" value="tRNA_Ile_lys_synt_N"/>
</dbReference>
<dbReference type="NCBIfam" id="TIGR02432">
    <property type="entry name" value="lysidine_TilS_N"/>
    <property type="match status" value="1"/>
</dbReference>
<dbReference type="PANTHER" id="PTHR43033">
    <property type="entry name" value="TRNA(ILE)-LYSIDINE SYNTHASE-RELATED"/>
    <property type="match status" value="1"/>
</dbReference>
<dbReference type="PANTHER" id="PTHR43033:SF1">
    <property type="entry name" value="TRNA(ILE)-LYSIDINE SYNTHASE-RELATED"/>
    <property type="match status" value="1"/>
</dbReference>
<dbReference type="Pfam" id="PF01171">
    <property type="entry name" value="ATP_bind_3"/>
    <property type="match status" value="1"/>
</dbReference>
<dbReference type="SUPFAM" id="SSF52402">
    <property type="entry name" value="Adenine nucleotide alpha hydrolases-like"/>
    <property type="match status" value="1"/>
</dbReference>
<protein>
    <recommendedName>
        <fullName evidence="1">tRNA(Ile)-lysidine synthase</fullName>
        <ecNumber evidence="1">6.3.4.19</ecNumber>
    </recommendedName>
    <alternativeName>
        <fullName evidence="1">tRNA(Ile)-2-lysyl-cytidine synthase</fullName>
    </alternativeName>
    <alternativeName>
        <fullName evidence="1">tRNA(Ile)-lysidine synthetase</fullName>
    </alternativeName>
</protein>
<reference key="1">
    <citation type="journal article" date="2001" name="Nucleic Acids Res.">
        <title>The complete genome sequence of the murine respiratory pathogen Mycoplasma pulmonis.</title>
        <authorList>
            <person name="Chambaud I."/>
            <person name="Heilig R."/>
            <person name="Ferris S."/>
            <person name="Barbe V."/>
            <person name="Samson D."/>
            <person name="Galisson F."/>
            <person name="Moszer I."/>
            <person name="Dybvig K."/>
            <person name="Wroblewski H."/>
            <person name="Viari A."/>
            <person name="Rocha E.P.C."/>
            <person name="Blanchard A."/>
        </authorList>
    </citation>
    <scope>NUCLEOTIDE SEQUENCE [LARGE SCALE GENOMIC DNA]</scope>
    <source>
        <strain>UAB CTIP</strain>
    </source>
</reference>
<feature type="chain" id="PRO_0000181732" description="tRNA(Ile)-lysidine synthase">
    <location>
        <begin position="1"/>
        <end position="286"/>
    </location>
</feature>
<feature type="binding site" evidence="1">
    <location>
        <begin position="7"/>
        <end position="12"/>
    </location>
    <ligand>
        <name>ATP</name>
        <dbReference type="ChEBI" id="CHEBI:30616"/>
    </ligand>
</feature>
<sequence>MKLIAVSGGPDSMLLLDVFKHHDIVVAHVNYNKRNSSKRDQKIVEDYCFKNNIKLEILNLTDYEVKGNFHDWARKKRFDFFKLVYEKYNCDEILLAHHKDDFVETFLIQKNQKRKPLYWSIKSKNFNFGMNINRPFIHKYWKNQILKILDNKQIFFGQDETNKENIYLRNKIRNNLLNKEFLKRLIYIKILFLNFFKLRKIKKIEQDFNKWKEQNFDKQNFLKSKFQENLITIFISEKTNNSINLSRGKIQQIIKFINSEKNEKKFILNKEFYLVKAKKIIKVLKK</sequence>
<keyword id="KW-0067">ATP-binding</keyword>
<keyword id="KW-0963">Cytoplasm</keyword>
<keyword id="KW-0436">Ligase</keyword>
<keyword id="KW-0547">Nucleotide-binding</keyword>
<keyword id="KW-1185">Reference proteome</keyword>
<keyword id="KW-0819">tRNA processing</keyword>
<comment type="function">
    <text evidence="1">Ligates lysine onto the cytidine present at position 34 of the AUA codon-specific tRNA(Ile) that contains the anticodon CAU, in an ATP-dependent manner. Cytidine is converted to lysidine, thus changing the amino acid specificity of the tRNA from methionine to isoleucine.</text>
</comment>
<comment type="catalytic activity">
    <reaction evidence="1">
        <text>cytidine(34) in tRNA(Ile2) + L-lysine + ATP = lysidine(34) in tRNA(Ile2) + AMP + diphosphate + H(+)</text>
        <dbReference type="Rhea" id="RHEA:43744"/>
        <dbReference type="Rhea" id="RHEA-COMP:10625"/>
        <dbReference type="Rhea" id="RHEA-COMP:10670"/>
        <dbReference type="ChEBI" id="CHEBI:15378"/>
        <dbReference type="ChEBI" id="CHEBI:30616"/>
        <dbReference type="ChEBI" id="CHEBI:32551"/>
        <dbReference type="ChEBI" id="CHEBI:33019"/>
        <dbReference type="ChEBI" id="CHEBI:82748"/>
        <dbReference type="ChEBI" id="CHEBI:83665"/>
        <dbReference type="ChEBI" id="CHEBI:456215"/>
        <dbReference type="EC" id="6.3.4.19"/>
    </reaction>
</comment>
<comment type="subcellular location">
    <subcellularLocation>
        <location evidence="1">Cytoplasm</location>
    </subcellularLocation>
</comment>
<comment type="domain">
    <text>The N-terminal region contains the highly conserved SGGXDS motif, predicted to be a P-loop motif involved in ATP binding.</text>
</comment>
<comment type="similarity">
    <text evidence="1">Belongs to the tRNA(Ile)-lysidine synthase family.</text>
</comment>
<organism>
    <name type="scientific">Mycoplasmopsis pulmonis (strain UAB CTIP)</name>
    <name type="common">Mycoplasma pulmonis</name>
    <dbReference type="NCBI Taxonomy" id="272635"/>
    <lineage>
        <taxon>Bacteria</taxon>
        <taxon>Bacillati</taxon>
        <taxon>Mycoplasmatota</taxon>
        <taxon>Mycoplasmoidales</taxon>
        <taxon>Metamycoplasmataceae</taxon>
        <taxon>Mycoplasmopsis</taxon>
    </lineage>
</organism>
<evidence type="ECO:0000255" key="1">
    <source>
        <dbReference type="HAMAP-Rule" id="MF_01161"/>
    </source>
</evidence>